<dbReference type="EC" id="1.14.14.80" evidence="4"/>
<dbReference type="EMBL" id="EU552421">
    <property type="protein sequence ID" value="ACD75402.1"/>
    <property type="molecule type" value="Genomic_DNA"/>
</dbReference>
<dbReference type="SMR" id="B8QHP5"/>
<dbReference type="BRENDA" id="1.14.14.80">
    <property type="organism ID" value="1101"/>
</dbReference>
<dbReference type="GO" id="GO:0016020">
    <property type="term" value="C:membrane"/>
    <property type="evidence" value="ECO:0007669"/>
    <property type="project" value="UniProtKB-SubCell"/>
</dbReference>
<dbReference type="GO" id="GO:0020037">
    <property type="term" value="F:heme binding"/>
    <property type="evidence" value="ECO:0007669"/>
    <property type="project" value="InterPro"/>
</dbReference>
<dbReference type="GO" id="GO:0005506">
    <property type="term" value="F:iron ion binding"/>
    <property type="evidence" value="ECO:0007669"/>
    <property type="project" value="InterPro"/>
</dbReference>
<dbReference type="GO" id="GO:0102033">
    <property type="term" value="F:long-chain fatty acid omega-hydroxylase activity"/>
    <property type="evidence" value="ECO:0007669"/>
    <property type="project" value="UniProtKB-EC"/>
</dbReference>
<dbReference type="CDD" id="cd11063">
    <property type="entry name" value="CYP52"/>
    <property type="match status" value="1"/>
</dbReference>
<dbReference type="Gene3D" id="1.10.630.10">
    <property type="entry name" value="Cytochrome P450"/>
    <property type="match status" value="1"/>
</dbReference>
<dbReference type="InterPro" id="IPR001128">
    <property type="entry name" value="Cyt_P450"/>
</dbReference>
<dbReference type="InterPro" id="IPR017972">
    <property type="entry name" value="Cyt_P450_CS"/>
</dbReference>
<dbReference type="InterPro" id="IPR002974">
    <property type="entry name" value="Cyt_P450_E_CYP52_ascomycetes"/>
</dbReference>
<dbReference type="InterPro" id="IPR047146">
    <property type="entry name" value="Cyt_P450_E_CYP52_fungi"/>
</dbReference>
<dbReference type="InterPro" id="IPR002402">
    <property type="entry name" value="Cyt_P450_E_grp-II"/>
</dbReference>
<dbReference type="InterPro" id="IPR036396">
    <property type="entry name" value="Cyt_P450_sf"/>
</dbReference>
<dbReference type="PANTHER" id="PTHR24287">
    <property type="entry name" value="P450, PUTATIVE (EUROFUNG)-RELATED"/>
    <property type="match status" value="1"/>
</dbReference>
<dbReference type="PANTHER" id="PTHR24287:SF1">
    <property type="entry name" value="P450, PUTATIVE (EUROFUNG)-RELATED"/>
    <property type="match status" value="1"/>
</dbReference>
<dbReference type="Pfam" id="PF00067">
    <property type="entry name" value="p450"/>
    <property type="match status" value="1"/>
</dbReference>
<dbReference type="PRINTS" id="PR00464">
    <property type="entry name" value="EP450II"/>
</dbReference>
<dbReference type="PRINTS" id="PR01239">
    <property type="entry name" value="EP450IICYP52"/>
</dbReference>
<dbReference type="PRINTS" id="PR00385">
    <property type="entry name" value="P450"/>
</dbReference>
<dbReference type="SUPFAM" id="SSF48264">
    <property type="entry name" value="Cytochrome P450"/>
    <property type="match status" value="1"/>
</dbReference>
<dbReference type="PROSITE" id="PS00086">
    <property type="entry name" value="CYTOCHROME_P450"/>
    <property type="match status" value="1"/>
</dbReference>
<accession>B8QHP5</accession>
<comment type="function">
    <text evidence="4">Catalyzes the terminal (at the omega-position) hydroxylation of a fatty acid. Probably involved in alkane metabolism. Linoleic acid is the preferred substrate, but it acts on various other C-16, C-18 and C-20 saturated and unsaturated fatty acids, namely palmitic, palmitoleic, stearic, oleic, alpha-linoleic, arachidonic and myristic acid.</text>
</comment>
<comment type="catalytic activity">
    <reaction evidence="4">
        <text>an omega-methyl-long-chain fatty acid + reduced [NADPH--hemoprotein reductase] + O2 = an omega-hydroxy-long-chain fatty acid + oxidized [NADPH--hemoprotein reductase] + H2O + H(+)</text>
        <dbReference type="Rhea" id="RHEA:56748"/>
        <dbReference type="Rhea" id="RHEA-COMP:11964"/>
        <dbReference type="Rhea" id="RHEA-COMP:11965"/>
        <dbReference type="ChEBI" id="CHEBI:15377"/>
        <dbReference type="ChEBI" id="CHEBI:15378"/>
        <dbReference type="ChEBI" id="CHEBI:15379"/>
        <dbReference type="ChEBI" id="CHEBI:57618"/>
        <dbReference type="ChEBI" id="CHEBI:58210"/>
        <dbReference type="ChEBI" id="CHEBI:140991"/>
        <dbReference type="ChEBI" id="CHEBI:140992"/>
        <dbReference type="EC" id="1.14.14.80"/>
    </reaction>
</comment>
<comment type="catalytic activity">
    <reaction evidence="4">
        <text>(9Z,12Z)-octadecadienoate + reduced [NADPH--hemoprotein reductase] + O2 = 18-hydroxy-(9Z,12Z)-octadecadienoate + oxidized [NADPH--hemoprotein reductase] + H2O + H(+)</text>
        <dbReference type="Rhea" id="RHEA:60580"/>
        <dbReference type="Rhea" id="RHEA-COMP:11964"/>
        <dbReference type="Rhea" id="RHEA-COMP:11965"/>
        <dbReference type="ChEBI" id="CHEBI:15377"/>
        <dbReference type="ChEBI" id="CHEBI:15378"/>
        <dbReference type="ChEBI" id="CHEBI:15379"/>
        <dbReference type="ChEBI" id="CHEBI:30245"/>
        <dbReference type="ChEBI" id="CHEBI:57618"/>
        <dbReference type="ChEBI" id="CHEBI:58210"/>
        <dbReference type="ChEBI" id="CHEBI:132029"/>
    </reaction>
</comment>
<comment type="catalytic activity">
    <reaction evidence="4">
        <text>(9Z)-octadecenoate + reduced [NADPH--hemoprotein reductase] + O2 = 18-hydroxy-(9Z)-octadecenoate + oxidized [NADPH--hemoprotein reductase] + H2O + H(+)</text>
        <dbReference type="Rhea" id="RHEA:41728"/>
        <dbReference type="Rhea" id="RHEA-COMP:11964"/>
        <dbReference type="Rhea" id="RHEA-COMP:11965"/>
        <dbReference type="ChEBI" id="CHEBI:15377"/>
        <dbReference type="ChEBI" id="CHEBI:15378"/>
        <dbReference type="ChEBI" id="CHEBI:15379"/>
        <dbReference type="ChEBI" id="CHEBI:30823"/>
        <dbReference type="ChEBI" id="CHEBI:57618"/>
        <dbReference type="ChEBI" id="CHEBI:58210"/>
        <dbReference type="ChEBI" id="CHEBI:78424"/>
        <dbReference type="EC" id="1.14.14.80"/>
    </reaction>
</comment>
<comment type="catalytic activity">
    <reaction evidence="4">
        <text>hexadecanoate + reduced [NADPH--hemoprotein reductase] + O2 = 16-hydroxyhexadecanoate + oxidized [NADPH--hemoprotein reductase] + H2O + H(+)</text>
        <dbReference type="Rhea" id="RHEA:40199"/>
        <dbReference type="Rhea" id="RHEA-COMP:11964"/>
        <dbReference type="Rhea" id="RHEA-COMP:11965"/>
        <dbReference type="ChEBI" id="CHEBI:7896"/>
        <dbReference type="ChEBI" id="CHEBI:15377"/>
        <dbReference type="ChEBI" id="CHEBI:15378"/>
        <dbReference type="ChEBI" id="CHEBI:15379"/>
        <dbReference type="ChEBI" id="CHEBI:55329"/>
        <dbReference type="ChEBI" id="CHEBI:57618"/>
        <dbReference type="ChEBI" id="CHEBI:58210"/>
        <dbReference type="EC" id="1.14.14.80"/>
    </reaction>
</comment>
<comment type="catalytic activity">
    <reaction evidence="4">
        <text>(9Z)-hexadecenoate + reduced [NADPH--hemoprotein reductase] + O2 = (9Z)-16-hydroxyhexadec-9-enoate + oxidized [NADPH--hemoprotein reductase] + H2O + H(+)</text>
        <dbReference type="Rhea" id="RHEA:60940"/>
        <dbReference type="Rhea" id="RHEA-COMP:11964"/>
        <dbReference type="Rhea" id="RHEA-COMP:11965"/>
        <dbReference type="ChEBI" id="CHEBI:15377"/>
        <dbReference type="ChEBI" id="CHEBI:15378"/>
        <dbReference type="ChEBI" id="CHEBI:15379"/>
        <dbReference type="ChEBI" id="CHEBI:32372"/>
        <dbReference type="ChEBI" id="CHEBI:57618"/>
        <dbReference type="ChEBI" id="CHEBI:58210"/>
        <dbReference type="ChEBI" id="CHEBI:144048"/>
    </reaction>
</comment>
<comment type="catalytic activity">
    <reaction evidence="4">
        <text>octadecanoate + reduced [NADPH--hemoprotein reductase] + O2 = 18-hydroxyoctadecanoate + oxidized [NADPH--hemoprotein reductase] + H2O + H(+)</text>
        <dbReference type="Rhea" id="RHEA:46356"/>
        <dbReference type="Rhea" id="RHEA-COMP:11964"/>
        <dbReference type="Rhea" id="RHEA-COMP:11965"/>
        <dbReference type="ChEBI" id="CHEBI:15377"/>
        <dbReference type="ChEBI" id="CHEBI:15378"/>
        <dbReference type="ChEBI" id="CHEBI:15379"/>
        <dbReference type="ChEBI" id="CHEBI:25629"/>
        <dbReference type="ChEBI" id="CHEBI:57618"/>
        <dbReference type="ChEBI" id="CHEBI:58210"/>
        <dbReference type="ChEBI" id="CHEBI:86046"/>
        <dbReference type="EC" id="1.14.14.80"/>
    </reaction>
</comment>
<comment type="cofactor">
    <cofactor evidence="1">
        <name>heme</name>
        <dbReference type="ChEBI" id="CHEBI:30413"/>
    </cofactor>
</comment>
<comment type="subcellular location">
    <subcellularLocation>
        <location evidence="2">Membrane</location>
        <topology evidence="2">Single-pass membrane protein</topology>
    </subcellularLocation>
</comment>
<comment type="induction">
    <text evidence="3">Up-regulated when grown on alkanes as sole carbon source.</text>
</comment>
<comment type="similarity">
    <text evidence="6">Belongs to the cytochrome P450 family.</text>
</comment>
<name>CP52N_STABO</name>
<feature type="chain" id="PRO_0000447697" description="Cytochrome P450 52-N1">
    <location>
        <begin position="1"/>
        <end position="523"/>
    </location>
</feature>
<feature type="transmembrane region" description="Helical" evidence="2">
    <location>
        <begin position="5"/>
        <end position="25"/>
    </location>
</feature>
<feature type="binding site" description="axial binding residue" evidence="1">
    <location>
        <position position="469"/>
    </location>
    <ligand>
        <name>heme</name>
        <dbReference type="ChEBI" id="CHEBI:30413"/>
    </ligand>
    <ligandPart>
        <name>Fe</name>
        <dbReference type="ChEBI" id="CHEBI:18248"/>
    </ligandPart>
</feature>
<evidence type="ECO:0000250" key="1">
    <source>
        <dbReference type="UniProtKB" id="P04798"/>
    </source>
</evidence>
<evidence type="ECO:0000255" key="2"/>
<evidence type="ECO:0000269" key="3">
    <source>
    </source>
</evidence>
<evidence type="ECO:0000269" key="4">
    <source>
    </source>
</evidence>
<evidence type="ECO:0000303" key="5">
    <source>
    </source>
</evidence>
<evidence type="ECO:0000305" key="6"/>
<sequence>MILYAVLGAFAAFLLYMDVLYPFVIYPLRARWHKCGYIPRDLSWPLGIPLTLVVLSKLRKDMLLQFMAAQDLSRPYKTSLRQFLGKWVIATRDPENIKAVLSTKFNDFSLKERGNRMRHVIGDGIFTQDGAPWKHSRDMLRPQFTKDQISRVELLSHHIDVLIREIRKSGGNVELQRLFHLMTMDTATHFLFGESVGSLEVSGESKGIEITDPKTGEIVNTVDFVESYTFANKFALKKIILNDLEFLADLTEPSYKWHLRRVHTVMDHYVQLALKATEKYDPDDDSEKGEYYFSHELAKLTRDPLSLRDQLFNILIAGRDTTAATLSYAFHYLTKNPAIYAKVREDVLTVFPNGDASLATYEDLRKAKYLQMVIKEVLRLAPAVPLNTRAAVRDTYLPRGGGPAGNLPVFVPKGTAVNYPTYILHRDPDIYGADAYEFNPERWRPENKLPNSPMYSWGYIPFNGGPRICIGQQFALTEIALTMIKLVLEFERLEPADDFEPNLQDKSSLTVMVGGSGVRVKLS</sequence>
<keyword id="KW-0349">Heme</keyword>
<keyword id="KW-0408">Iron</keyword>
<keyword id="KW-0472">Membrane</keyword>
<keyword id="KW-0479">Metal-binding</keyword>
<keyword id="KW-0503">Monooxygenase</keyword>
<keyword id="KW-0560">Oxidoreductase</keyword>
<keyword id="KW-0812">Transmembrane</keyword>
<keyword id="KW-1133">Transmembrane helix</keyword>
<protein>
    <recommendedName>
        <fullName evidence="6">Cytochrome P450 52-N1</fullName>
        <shortName>CYP52-N1</shortName>
        <ecNumber evidence="4">1.14.14.80</ecNumber>
    </recommendedName>
    <alternativeName>
        <fullName evidence="5">Cytochrome P450 monooxygenase CYP52-N1</fullName>
    </alternativeName>
</protein>
<reference key="1">
    <citation type="journal article" date="2009" name="FEMS Yeast Res.">
        <title>Importance of the cytochrome P450 monooxygenase CYP52 family for the sophorolipid-producing yeast Candida bombicola.</title>
        <authorList>
            <person name="van Bogaert I.N."/>
            <person name="Demey M."/>
            <person name="Develter D."/>
            <person name="Soetaert W."/>
            <person name="Vandamme E.J."/>
        </authorList>
    </citation>
    <scope>NUCLEOTIDE SEQUENCE [GENOMIC DNA]</scope>
    <scope>INDUCTION</scope>
    <source>
        <strain>ATCC 22214 / CBS 6009 / JCM 9596 / NBRC 10243 / NRRL Y-17069</strain>
    </source>
</reference>
<reference key="2">
    <citation type="journal article" date="2014" name="Appl. Environ. Microbiol.">
        <title>Expression and characterization of CYP52 genes involved in the biosynthesis of sophorolipid and alkane metabolism from Starmerella bombicola.</title>
        <authorList>
            <person name="Huang F.C."/>
            <person name="Peter A."/>
            <person name="Schwab W."/>
        </authorList>
    </citation>
    <scope>FUNCTION</scope>
    <scope>CATALYTIC ACTIVITY</scope>
    <scope>SUBSTRATE SPECIFICITY</scope>
</reference>
<organism>
    <name type="scientific">Starmerella bombicola</name>
    <name type="common">Yeast</name>
    <name type="synonym">Candida bombicola</name>
    <dbReference type="NCBI Taxonomy" id="75736"/>
    <lineage>
        <taxon>Eukaryota</taxon>
        <taxon>Fungi</taxon>
        <taxon>Dikarya</taxon>
        <taxon>Ascomycota</taxon>
        <taxon>Saccharomycotina</taxon>
        <taxon>Dipodascomycetes</taxon>
        <taxon>Dipodascales</taxon>
        <taxon>Trichomonascaceae</taxon>
        <taxon>Starmerella</taxon>
    </lineage>
</organism>
<gene>
    <name evidence="5" type="primary">cyp52N1</name>
</gene>
<proteinExistence type="evidence at protein level"/>